<proteinExistence type="inferred from homology"/>
<sequence>MEITELKREIQQIAARLGKTQDYLDLPALNANIQDLEQIAAQPDFWDNQETAQKTLQQLNDLKSSVEEYHQWMGQLEDLKAIAELLELEEDATLNEEAEANLTQLNHELDRWELQRLLSGIYDSKGAVLTINAGAGGTDAQDWAEMLLRMYTRWGEQQGYKVHLTEISEGDEAGIKSATLEIEGRYAYGYLKGEKGTHRLVRISPFNANGKRQTSFAGIEVMPALEEEDLKVEIPEKDLEITTTRSGGKGGQNVNKVETAVRVVHLPTGIAVRCTQERSQLQNKEKALALLKAKLLIIAQEQRAQAIAEIRGDMVEAAWGNQIRNYVFHPYQMVKDVRTNTETTDVNGVMDGKLDLFIESYLRSN</sequence>
<accession>B7K0A6</accession>
<comment type="function">
    <text evidence="1">Peptide chain release factor 2 directs the termination of translation in response to the peptide chain termination codons UGA and UAA.</text>
</comment>
<comment type="subcellular location">
    <subcellularLocation>
        <location evidence="1">Cytoplasm</location>
    </subcellularLocation>
</comment>
<comment type="PTM">
    <text evidence="1">Methylated by PrmC. Methylation increases the termination efficiency of RF2.</text>
</comment>
<comment type="similarity">
    <text evidence="1">Belongs to the prokaryotic/mitochondrial release factor family.</text>
</comment>
<gene>
    <name evidence="1" type="primary">prfB</name>
    <name type="ordered locus">PCC8801_3422</name>
</gene>
<name>RF2_RIPO1</name>
<keyword id="KW-0963">Cytoplasm</keyword>
<keyword id="KW-0488">Methylation</keyword>
<keyword id="KW-0648">Protein biosynthesis</keyword>
<keyword id="KW-1185">Reference proteome</keyword>
<dbReference type="EMBL" id="CP001287">
    <property type="protein sequence ID" value="ACK67390.1"/>
    <property type="molecule type" value="Genomic_DNA"/>
</dbReference>
<dbReference type="RefSeq" id="WP_012596650.1">
    <property type="nucleotide sequence ID" value="NC_011726.1"/>
</dbReference>
<dbReference type="SMR" id="B7K0A6"/>
<dbReference type="STRING" id="41431.PCC8801_3422"/>
<dbReference type="KEGG" id="cyp:PCC8801_3422"/>
<dbReference type="eggNOG" id="COG1186">
    <property type="taxonomic scope" value="Bacteria"/>
</dbReference>
<dbReference type="HOGENOM" id="CLU_220736_0_0_3"/>
<dbReference type="OrthoDB" id="9806673at2"/>
<dbReference type="Proteomes" id="UP000008204">
    <property type="component" value="Chromosome"/>
</dbReference>
<dbReference type="GO" id="GO:0005737">
    <property type="term" value="C:cytoplasm"/>
    <property type="evidence" value="ECO:0007669"/>
    <property type="project" value="UniProtKB-SubCell"/>
</dbReference>
<dbReference type="GO" id="GO:0016149">
    <property type="term" value="F:translation release factor activity, codon specific"/>
    <property type="evidence" value="ECO:0007669"/>
    <property type="project" value="UniProtKB-UniRule"/>
</dbReference>
<dbReference type="FunFam" id="3.30.160.20:FF:000027">
    <property type="entry name" value="Peptide chain release factor 1"/>
    <property type="match status" value="1"/>
</dbReference>
<dbReference type="Gene3D" id="3.30.160.20">
    <property type="match status" value="1"/>
</dbReference>
<dbReference type="Gene3D" id="3.30.70.1660">
    <property type="match status" value="1"/>
</dbReference>
<dbReference type="Gene3D" id="1.20.58.410">
    <property type="entry name" value="Release factor"/>
    <property type="match status" value="1"/>
</dbReference>
<dbReference type="HAMAP" id="MF_00094">
    <property type="entry name" value="Rel_fac_2"/>
    <property type="match status" value="1"/>
</dbReference>
<dbReference type="InterPro" id="IPR005139">
    <property type="entry name" value="PCRF"/>
</dbReference>
<dbReference type="InterPro" id="IPR000352">
    <property type="entry name" value="Pep_chain_release_fac_I"/>
</dbReference>
<dbReference type="InterPro" id="IPR045853">
    <property type="entry name" value="Pep_chain_release_fac_I_sf"/>
</dbReference>
<dbReference type="InterPro" id="IPR004374">
    <property type="entry name" value="PrfB"/>
</dbReference>
<dbReference type="NCBIfam" id="TIGR00020">
    <property type="entry name" value="prfB"/>
    <property type="match status" value="1"/>
</dbReference>
<dbReference type="PANTHER" id="PTHR43116:SF3">
    <property type="entry name" value="CLASS I PEPTIDE CHAIN RELEASE FACTOR"/>
    <property type="match status" value="1"/>
</dbReference>
<dbReference type="PANTHER" id="PTHR43116">
    <property type="entry name" value="PEPTIDE CHAIN RELEASE FACTOR 2"/>
    <property type="match status" value="1"/>
</dbReference>
<dbReference type="Pfam" id="PF03462">
    <property type="entry name" value="PCRF"/>
    <property type="match status" value="1"/>
</dbReference>
<dbReference type="Pfam" id="PF00472">
    <property type="entry name" value="RF-1"/>
    <property type="match status" value="1"/>
</dbReference>
<dbReference type="SMART" id="SM00937">
    <property type="entry name" value="PCRF"/>
    <property type="match status" value="1"/>
</dbReference>
<dbReference type="SUPFAM" id="SSF75620">
    <property type="entry name" value="Release factor"/>
    <property type="match status" value="1"/>
</dbReference>
<dbReference type="PROSITE" id="PS00745">
    <property type="entry name" value="RF_PROK_I"/>
    <property type="match status" value="1"/>
</dbReference>
<protein>
    <recommendedName>
        <fullName evidence="1">Peptide chain release factor 2</fullName>
        <shortName evidence="1">RF-2</shortName>
    </recommendedName>
</protein>
<reference key="1">
    <citation type="journal article" date="2011" name="MBio">
        <title>Novel metabolic attributes of the genus Cyanothece, comprising a group of unicellular nitrogen-fixing Cyanobacteria.</title>
        <authorList>
            <person name="Bandyopadhyay A."/>
            <person name="Elvitigala T."/>
            <person name="Welsh E."/>
            <person name="Stockel J."/>
            <person name="Liberton M."/>
            <person name="Min H."/>
            <person name="Sherman L.A."/>
            <person name="Pakrasi H.B."/>
        </authorList>
    </citation>
    <scope>NUCLEOTIDE SEQUENCE [LARGE SCALE GENOMIC DNA]</scope>
    <source>
        <strain>PCC 8801 / RF-1</strain>
    </source>
</reference>
<feature type="chain" id="PRO_1000117257" description="Peptide chain release factor 2">
    <location>
        <begin position="1"/>
        <end position="365"/>
    </location>
</feature>
<feature type="modified residue" description="N5-methylglutamine" evidence="1">
    <location>
        <position position="252"/>
    </location>
</feature>
<evidence type="ECO:0000255" key="1">
    <source>
        <dbReference type="HAMAP-Rule" id="MF_00094"/>
    </source>
</evidence>
<organism>
    <name type="scientific">Rippkaea orientalis (strain PCC 8801 / RF-1)</name>
    <name type="common">Cyanothece sp. (strain PCC 8801)</name>
    <dbReference type="NCBI Taxonomy" id="41431"/>
    <lineage>
        <taxon>Bacteria</taxon>
        <taxon>Bacillati</taxon>
        <taxon>Cyanobacteriota</taxon>
        <taxon>Cyanophyceae</taxon>
        <taxon>Oscillatoriophycideae</taxon>
        <taxon>Chroococcales</taxon>
        <taxon>Aphanothecaceae</taxon>
        <taxon>Rippkaea</taxon>
        <taxon>Rippkaea orientalis</taxon>
    </lineage>
</organism>